<comment type="function">
    <text evidence="2">Cell wall formation.</text>
</comment>
<comment type="catalytic activity">
    <reaction evidence="2">
        <text>2 D-alanine + ATP = D-alanyl-D-alanine + ADP + phosphate + H(+)</text>
        <dbReference type="Rhea" id="RHEA:11224"/>
        <dbReference type="ChEBI" id="CHEBI:15378"/>
        <dbReference type="ChEBI" id="CHEBI:30616"/>
        <dbReference type="ChEBI" id="CHEBI:43474"/>
        <dbReference type="ChEBI" id="CHEBI:57416"/>
        <dbReference type="ChEBI" id="CHEBI:57822"/>
        <dbReference type="ChEBI" id="CHEBI:456216"/>
        <dbReference type="EC" id="6.3.2.4"/>
    </reaction>
</comment>
<comment type="cofactor">
    <cofactor evidence="1">
        <name>Mg(2+)</name>
        <dbReference type="ChEBI" id="CHEBI:18420"/>
    </cofactor>
    <cofactor evidence="1">
        <name>Mn(2+)</name>
        <dbReference type="ChEBI" id="CHEBI:29035"/>
    </cofactor>
    <text evidence="1">Binds 2 magnesium or manganese ions per subunit.</text>
</comment>
<comment type="pathway">
    <text evidence="2">Cell wall biogenesis; peptidoglycan biosynthesis.</text>
</comment>
<comment type="subcellular location">
    <subcellularLocation>
        <location evidence="2">Cytoplasm</location>
    </subcellularLocation>
</comment>
<comment type="similarity">
    <text evidence="2">Belongs to the D-alanine--D-alanine ligase family.</text>
</comment>
<proteinExistence type="inferred from homology"/>
<keyword id="KW-0067">ATP-binding</keyword>
<keyword id="KW-0133">Cell shape</keyword>
<keyword id="KW-0961">Cell wall biogenesis/degradation</keyword>
<keyword id="KW-0963">Cytoplasm</keyword>
<keyword id="KW-0436">Ligase</keyword>
<keyword id="KW-0460">Magnesium</keyword>
<keyword id="KW-0464">Manganese</keyword>
<keyword id="KW-0479">Metal-binding</keyword>
<keyword id="KW-0547">Nucleotide-binding</keyword>
<keyword id="KW-0573">Peptidoglycan synthesis</keyword>
<keyword id="KW-1185">Reference proteome</keyword>
<reference key="1">
    <citation type="journal article" date="2008" name="PLoS ONE">
        <title>Survival in nuclear waste, extreme resistance, and potential applications gleaned from the genome sequence of Kineococcus radiotolerans SRS30216.</title>
        <authorList>
            <person name="Bagwell C.E."/>
            <person name="Bhat S."/>
            <person name="Hawkins G.M."/>
            <person name="Smith B.W."/>
            <person name="Biswas T."/>
            <person name="Hoover T.R."/>
            <person name="Saunders E."/>
            <person name="Han C.S."/>
            <person name="Tsodikov O.V."/>
            <person name="Shimkets L.J."/>
        </authorList>
    </citation>
    <scope>NUCLEOTIDE SEQUENCE [LARGE SCALE GENOMIC DNA]</scope>
    <source>
        <strain>ATCC BAA-149 / DSM 14245 / SRS30216</strain>
    </source>
</reference>
<organism>
    <name type="scientific">Kineococcus radiotolerans (strain ATCC BAA-149 / DSM 14245 / SRS30216)</name>
    <dbReference type="NCBI Taxonomy" id="266940"/>
    <lineage>
        <taxon>Bacteria</taxon>
        <taxon>Bacillati</taxon>
        <taxon>Actinomycetota</taxon>
        <taxon>Actinomycetes</taxon>
        <taxon>Kineosporiales</taxon>
        <taxon>Kineosporiaceae</taxon>
        <taxon>Kineococcus</taxon>
    </lineage>
</organism>
<feature type="chain" id="PRO_0000341114" description="D-alanine--D-alanine ligase">
    <location>
        <begin position="1"/>
        <end position="376"/>
    </location>
</feature>
<feature type="domain" description="ATP-grasp" evidence="2">
    <location>
        <begin position="153"/>
        <end position="366"/>
    </location>
</feature>
<feature type="binding site" evidence="2">
    <location>
        <begin position="185"/>
        <end position="240"/>
    </location>
    <ligand>
        <name>ATP</name>
        <dbReference type="ChEBI" id="CHEBI:30616"/>
    </ligand>
</feature>
<feature type="binding site" evidence="2">
    <location>
        <position position="317"/>
    </location>
    <ligand>
        <name>Mg(2+)</name>
        <dbReference type="ChEBI" id="CHEBI:18420"/>
        <label>1</label>
    </ligand>
</feature>
<feature type="binding site" evidence="2">
    <location>
        <position position="333"/>
    </location>
    <ligand>
        <name>Mg(2+)</name>
        <dbReference type="ChEBI" id="CHEBI:18420"/>
        <label>1</label>
    </ligand>
</feature>
<feature type="binding site" evidence="2">
    <location>
        <position position="333"/>
    </location>
    <ligand>
        <name>Mg(2+)</name>
        <dbReference type="ChEBI" id="CHEBI:18420"/>
        <label>2</label>
    </ligand>
</feature>
<feature type="binding site" evidence="2">
    <location>
        <position position="335"/>
    </location>
    <ligand>
        <name>Mg(2+)</name>
        <dbReference type="ChEBI" id="CHEBI:18420"/>
        <label>2</label>
    </ligand>
</feature>
<accession>A6W7R2</accession>
<sequence>MSSQPKPRVAVVFGGRSSEHAISCVTAAGVLAALDGDVYDVVPIGITTTGRWVLVEDPARFELTDGALPEVPATGTPVGLPLDVDTKALQRLGGAPGAPALAELGEVDVVLPLLHGPFGEDGTLQGLLELSDTRYVGSGVLASAAGMDKQVMKLLLAGQGLPVGPWTSFRARRWDTDRDGVVAEVEALGYPVFVKPARAGSSIGITRVTSREGLAAAVAEAVSHDPKVVVEAALVGREIECGVLEDLDGGEPLTSLPGEVEVVGGHDFYDFEAKYLDSGNVRLTCPADLPDDVVAAVRRTAVRVFEAMGAEGLARVDLFVDPARGEDGIVVNEINTMPGFTPFSMYPRMWAATGVDYPELVHRLIQLALRRPTGLR</sequence>
<gene>
    <name evidence="2" type="primary">ddl</name>
    <name type="ordered locus">Krad_1363</name>
</gene>
<protein>
    <recommendedName>
        <fullName evidence="2">D-alanine--D-alanine ligase</fullName>
        <ecNumber evidence="2">6.3.2.4</ecNumber>
    </recommendedName>
    <alternativeName>
        <fullName evidence="2">D-Ala-D-Ala ligase</fullName>
    </alternativeName>
    <alternativeName>
        <fullName evidence="2">D-alanylalanine synthetase</fullName>
    </alternativeName>
</protein>
<dbReference type="EC" id="6.3.2.4" evidence="2"/>
<dbReference type="EMBL" id="CP000750">
    <property type="protein sequence ID" value="ABS02851.1"/>
    <property type="molecule type" value="Genomic_DNA"/>
</dbReference>
<dbReference type="RefSeq" id="WP_012084286.1">
    <property type="nucleotide sequence ID" value="NC_009664.2"/>
</dbReference>
<dbReference type="SMR" id="A6W7R2"/>
<dbReference type="STRING" id="266940.Krad_1363"/>
<dbReference type="KEGG" id="kra:Krad_1363"/>
<dbReference type="eggNOG" id="COG1181">
    <property type="taxonomic scope" value="Bacteria"/>
</dbReference>
<dbReference type="HOGENOM" id="CLU_039268_0_1_11"/>
<dbReference type="OrthoDB" id="9813261at2"/>
<dbReference type="UniPathway" id="UPA00219"/>
<dbReference type="Proteomes" id="UP000001116">
    <property type="component" value="Chromosome"/>
</dbReference>
<dbReference type="GO" id="GO:0005829">
    <property type="term" value="C:cytosol"/>
    <property type="evidence" value="ECO:0007669"/>
    <property type="project" value="TreeGrafter"/>
</dbReference>
<dbReference type="GO" id="GO:0005524">
    <property type="term" value="F:ATP binding"/>
    <property type="evidence" value="ECO:0007669"/>
    <property type="project" value="UniProtKB-KW"/>
</dbReference>
<dbReference type="GO" id="GO:0008716">
    <property type="term" value="F:D-alanine-D-alanine ligase activity"/>
    <property type="evidence" value="ECO:0007669"/>
    <property type="project" value="UniProtKB-UniRule"/>
</dbReference>
<dbReference type="GO" id="GO:0046872">
    <property type="term" value="F:metal ion binding"/>
    <property type="evidence" value="ECO:0007669"/>
    <property type="project" value="UniProtKB-KW"/>
</dbReference>
<dbReference type="GO" id="GO:0071555">
    <property type="term" value="P:cell wall organization"/>
    <property type="evidence" value="ECO:0007669"/>
    <property type="project" value="UniProtKB-KW"/>
</dbReference>
<dbReference type="GO" id="GO:0009252">
    <property type="term" value="P:peptidoglycan biosynthetic process"/>
    <property type="evidence" value="ECO:0007669"/>
    <property type="project" value="UniProtKB-UniRule"/>
</dbReference>
<dbReference type="GO" id="GO:0008360">
    <property type="term" value="P:regulation of cell shape"/>
    <property type="evidence" value="ECO:0007669"/>
    <property type="project" value="UniProtKB-KW"/>
</dbReference>
<dbReference type="FunFam" id="3.30.1490.20:FF:000007">
    <property type="entry name" value="D-alanine--D-alanine ligase"/>
    <property type="match status" value="1"/>
</dbReference>
<dbReference type="FunFam" id="3.30.470.20:FF:000008">
    <property type="entry name" value="D-alanine--D-alanine ligase"/>
    <property type="match status" value="1"/>
</dbReference>
<dbReference type="Gene3D" id="3.40.50.20">
    <property type="match status" value="1"/>
</dbReference>
<dbReference type="Gene3D" id="3.30.1490.20">
    <property type="entry name" value="ATP-grasp fold, A domain"/>
    <property type="match status" value="1"/>
</dbReference>
<dbReference type="Gene3D" id="3.30.470.20">
    <property type="entry name" value="ATP-grasp fold, B domain"/>
    <property type="match status" value="1"/>
</dbReference>
<dbReference type="HAMAP" id="MF_00047">
    <property type="entry name" value="Dala_Dala_lig"/>
    <property type="match status" value="1"/>
</dbReference>
<dbReference type="InterPro" id="IPR011761">
    <property type="entry name" value="ATP-grasp"/>
</dbReference>
<dbReference type="InterPro" id="IPR013815">
    <property type="entry name" value="ATP_grasp_subdomain_1"/>
</dbReference>
<dbReference type="InterPro" id="IPR000291">
    <property type="entry name" value="D-Ala_lig_Van_CS"/>
</dbReference>
<dbReference type="InterPro" id="IPR005905">
    <property type="entry name" value="D_ala_D_ala"/>
</dbReference>
<dbReference type="InterPro" id="IPR011095">
    <property type="entry name" value="Dala_Dala_lig_C"/>
</dbReference>
<dbReference type="InterPro" id="IPR011127">
    <property type="entry name" value="Dala_Dala_lig_N"/>
</dbReference>
<dbReference type="InterPro" id="IPR016185">
    <property type="entry name" value="PreATP-grasp_dom_sf"/>
</dbReference>
<dbReference type="NCBIfam" id="TIGR01205">
    <property type="entry name" value="D_ala_D_alaTIGR"/>
    <property type="match status" value="1"/>
</dbReference>
<dbReference type="NCBIfam" id="NF002528">
    <property type="entry name" value="PRK01966.1-4"/>
    <property type="match status" value="1"/>
</dbReference>
<dbReference type="PANTHER" id="PTHR23132">
    <property type="entry name" value="D-ALANINE--D-ALANINE LIGASE"/>
    <property type="match status" value="1"/>
</dbReference>
<dbReference type="PANTHER" id="PTHR23132:SF25">
    <property type="entry name" value="D-ALANINE--D-ALANINE LIGASE A"/>
    <property type="match status" value="1"/>
</dbReference>
<dbReference type="Pfam" id="PF07478">
    <property type="entry name" value="Dala_Dala_lig_C"/>
    <property type="match status" value="1"/>
</dbReference>
<dbReference type="Pfam" id="PF01820">
    <property type="entry name" value="Dala_Dala_lig_N"/>
    <property type="match status" value="1"/>
</dbReference>
<dbReference type="PIRSF" id="PIRSF039102">
    <property type="entry name" value="Ddl/VanB"/>
    <property type="match status" value="1"/>
</dbReference>
<dbReference type="SUPFAM" id="SSF56059">
    <property type="entry name" value="Glutathione synthetase ATP-binding domain-like"/>
    <property type="match status" value="1"/>
</dbReference>
<dbReference type="SUPFAM" id="SSF52440">
    <property type="entry name" value="PreATP-grasp domain"/>
    <property type="match status" value="1"/>
</dbReference>
<dbReference type="PROSITE" id="PS50975">
    <property type="entry name" value="ATP_GRASP"/>
    <property type="match status" value="1"/>
</dbReference>
<dbReference type="PROSITE" id="PS00843">
    <property type="entry name" value="DALA_DALA_LIGASE_1"/>
    <property type="match status" value="1"/>
</dbReference>
<dbReference type="PROSITE" id="PS00844">
    <property type="entry name" value="DALA_DALA_LIGASE_2"/>
    <property type="match status" value="1"/>
</dbReference>
<evidence type="ECO:0000250" key="1"/>
<evidence type="ECO:0000255" key="2">
    <source>
        <dbReference type="HAMAP-Rule" id="MF_00047"/>
    </source>
</evidence>
<name>DDL_KINRD</name>